<sequence length="97" mass="11202">MSLLTEVETLTRNGWECKCSDSSDPLIIAASIIGILHLILWILDRLFFKCIYRRLKYGLKRGPSTEGAPESMREEYRQEQQSAVDVDDVHFVNIELE</sequence>
<organism>
    <name type="scientific">Influenza A virus (strain A/Chicken/Pennsylvania/1/1983 H5N2)</name>
    <dbReference type="NCBI Taxonomy" id="385586"/>
    <lineage>
        <taxon>Viruses</taxon>
        <taxon>Riboviria</taxon>
        <taxon>Orthornavirae</taxon>
        <taxon>Negarnaviricota</taxon>
        <taxon>Polyploviricotina</taxon>
        <taxon>Insthoviricetes</taxon>
        <taxon>Articulavirales</taxon>
        <taxon>Orthomyxoviridae</taxon>
        <taxon>Alphainfluenzavirus</taxon>
        <taxon>Alphainfluenzavirus influenzae</taxon>
        <taxon>Influenza A virus</taxon>
    </lineage>
</organism>
<feature type="chain" id="PRO_0000326379" description="Matrix protein 2">
    <location>
        <begin position="1"/>
        <end position="97"/>
    </location>
</feature>
<feature type="topological domain" description="Virion surface" evidence="1">
    <location>
        <begin position="1"/>
        <end position="22"/>
    </location>
</feature>
<feature type="transmembrane region" description="Helical; Signal-anchor for type III membrane protein" evidence="1">
    <location>
        <begin position="23"/>
        <end position="43"/>
    </location>
</feature>
<feature type="topological domain" description="Intravirion" evidence="1">
    <location>
        <begin position="44"/>
        <end position="97"/>
    </location>
</feature>
<feature type="region of interest" description="Disordered" evidence="2">
    <location>
        <begin position="60"/>
        <end position="83"/>
    </location>
</feature>
<feature type="site" description="Essential for channel activity, possibly by being protonated during channel activation, and by forming the channel gate and the selective filter" evidence="1">
    <location>
        <position position="37"/>
    </location>
</feature>
<feature type="site" description="Seems to be involved in pH gating" evidence="1">
    <location>
        <position position="41"/>
    </location>
</feature>
<feature type="modified residue" description="Phosphoserine; by host" evidence="1">
    <location>
        <position position="64"/>
    </location>
</feature>
<feature type="modified residue" description="Phosphoserine; by host" evidence="1">
    <location>
        <position position="82"/>
    </location>
</feature>
<feature type="lipid moiety-binding region" description="S-palmitoyl cysteine; by host" evidence="1">
    <location>
        <position position="50"/>
    </location>
</feature>
<feature type="disulfide bond" description="Interchain (with C-17)" evidence="1">
    <location>
        <position position="17"/>
    </location>
</feature>
<feature type="disulfide bond" description="Interchain (with C-19)" evidence="1">
    <location>
        <position position="19"/>
    </location>
</feature>
<proteinExistence type="inferred from homology"/>
<evidence type="ECO:0000255" key="1">
    <source>
        <dbReference type="HAMAP-Rule" id="MF_04069"/>
    </source>
</evidence>
<evidence type="ECO:0000256" key="2">
    <source>
        <dbReference type="SAM" id="MobiDB-lite"/>
    </source>
</evidence>
<name>M2_I83A5</name>
<keyword id="KW-0025">Alternative splicing</keyword>
<keyword id="KW-1015">Disulfide bond</keyword>
<keyword id="KW-1032">Host cell membrane</keyword>
<keyword id="KW-1043">Host membrane</keyword>
<keyword id="KW-0945">Host-virus interaction</keyword>
<keyword id="KW-0375">Hydrogen ion transport</keyword>
<keyword id="KW-1083">Inhibition of host autophagy by virus</keyword>
<keyword id="KW-0407">Ion channel</keyword>
<keyword id="KW-0406">Ion transport</keyword>
<keyword id="KW-0449">Lipoprotein</keyword>
<keyword id="KW-0472">Membrane</keyword>
<keyword id="KW-0564">Palmitate</keyword>
<keyword id="KW-0597">Phosphoprotein</keyword>
<keyword id="KW-0735">Signal-anchor</keyword>
<keyword id="KW-0812">Transmembrane</keyword>
<keyword id="KW-1133">Transmembrane helix</keyword>
<keyword id="KW-0813">Transport</keyword>
<keyword id="KW-1182">Viral ion channel</keyword>
<keyword id="KW-0946">Virion</keyword>
<protein>
    <recommendedName>
        <fullName evidence="1">Matrix protein 2</fullName>
    </recommendedName>
    <alternativeName>
        <fullName evidence="1">Proton channel protein M2</fullName>
    </alternativeName>
</protein>
<dbReference type="EMBL" id="CY015074">
    <property type="protein sequence ID" value="ABI85097.1"/>
    <property type="molecule type" value="Genomic_RNA"/>
</dbReference>
<dbReference type="SMR" id="Q0A2I6"/>
<dbReference type="Proteomes" id="UP000008584">
    <property type="component" value="Genome"/>
</dbReference>
<dbReference type="GO" id="GO:0020002">
    <property type="term" value="C:host cell plasma membrane"/>
    <property type="evidence" value="ECO:0007669"/>
    <property type="project" value="UniProtKB-SubCell"/>
</dbReference>
<dbReference type="GO" id="GO:0016020">
    <property type="term" value="C:membrane"/>
    <property type="evidence" value="ECO:0007669"/>
    <property type="project" value="UniProtKB-UniRule"/>
</dbReference>
<dbReference type="GO" id="GO:0055036">
    <property type="term" value="C:virion membrane"/>
    <property type="evidence" value="ECO:0007669"/>
    <property type="project" value="UniProtKB-SubCell"/>
</dbReference>
<dbReference type="GO" id="GO:0005216">
    <property type="term" value="F:monoatomic ion channel activity"/>
    <property type="evidence" value="ECO:0007669"/>
    <property type="project" value="UniProtKB-UniRule"/>
</dbReference>
<dbReference type="GO" id="GO:0015078">
    <property type="term" value="F:proton transmembrane transporter activity"/>
    <property type="evidence" value="ECO:0007669"/>
    <property type="project" value="UniProtKB-UniRule"/>
</dbReference>
<dbReference type="GO" id="GO:0051259">
    <property type="term" value="P:protein complex oligomerization"/>
    <property type="evidence" value="ECO:0007669"/>
    <property type="project" value="UniProtKB-UniRule"/>
</dbReference>
<dbReference type="GO" id="GO:0044694">
    <property type="term" value="P:symbiont genome entry into host cell via pore formation in plasma membrane"/>
    <property type="evidence" value="ECO:0007669"/>
    <property type="project" value="UniProtKB-UniRule"/>
</dbReference>
<dbReference type="GO" id="GO:0140321">
    <property type="term" value="P:symbiont-mediated suppression of host autophagy"/>
    <property type="evidence" value="ECO:0007669"/>
    <property type="project" value="UniProtKB-KW"/>
</dbReference>
<dbReference type="Gene3D" id="6.10.250.1640">
    <property type="match status" value="1"/>
</dbReference>
<dbReference type="HAMAP" id="MF_04069">
    <property type="entry name" value="INFV_M2"/>
    <property type="match status" value="1"/>
</dbReference>
<dbReference type="InterPro" id="IPR002089">
    <property type="entry name" value="Flu_M2"/>
</dbReference>
<dbReference type="Pfam" id="PF00599">
    <property type="entry name" value="Flu_M2"/>
    <property type="match status" value="1"/>
</dbReference>
<accession>Q0A2I6</accession>
<reference key="1">
    <citation type="journal article" date="2006" name="Science">
        <title>Large-scale sequence analysis of avian influenza isolates.</title>
        <authorList>
            <person name="Obenauer J.C."/>
            <person name="Denson J."/>
            <person name="Mehta P.K."/>
            <person name="Su X."/>
            <person name="Mukatira S."/>
            <person name="Finkelstein D.B."/>
            <person name="Xu X."/>
            <person name="Wang J."/>
            <person name="Ma J."/>
            <person name="Fan Y."/>
            <person name="Rakestraw K.M."/>
            <person name="Webster R.G."/>
            <person name="Hoffmann E."/>
            <person name="Krauss S."/>
            <person name="Zheng J."/>
            <person name="Zhang Z."/>
            <person name="Naeve C.W."/>
        </authorList>
    </citation>
    <scope>NUCLEOTIDE SEQUENCE [GENOMIC RNA]</scope>
</reference>
<comment type="function">
    <text evidence="1">Forms a proton-selective ion channel that is necessary for the efficient release of the viral genome during virus entry. After attaching to the cell surface, the virion enters the cell by endocytosis. Acidification of the endosome triggers M2 ion channel activity. The influx of protons into virion interior is believed to disrupt interactions between the viral ribonucleoprotein (RNP), matrix protein 1 (M1), and lipid bilayers, thereby freeing the viral genome from interaction with viral proteins and enabling RNA segments to migrate to the host cell nucleus, where influenza virus RNA transcription and replication occur. Also plays a role in viral proteins secretory pathway. Elevates the intravesicular pH of normally acidic compartments, such as trans-Golgi network, preventing newly formed hemagglutinin from premature switching to the fusion-active conformation.</text>
</comment>
<comment type="activity regulation">
    <text>The M2 protein from most influenza A strains is inhibited by amantadine and rimantadine, resulting in viral uncoating incapacity. Emergence of amantadine-resistant variants is usually rapid.</text>
</comment>
<comment type="subunit">
    <text evidence="1">Homotetramer; composed of two disulfide-linked dimers held together by non-covalent interactions. May interact with matrix protein 1.</text>
</comment>
<comment type="subcellular location">
    <subcellularLocation>
        <location evidence="1">Virion membrane</location>
    </subcellularLocation>
    <subcellularLocation>
        <location evidence="1">Host apical cell membrane</location>
        <topology evidence="1">Single-pass type III membrane protein</topology>
    </subcellularLocation>
    <text evidence="1">Abundantly expressed at the apical plasma membrane in infected polarized epithelial cells, in close proximity to budding and assembled virions. Minor component of virions (only 16-20 molecules/virion).</text>
</comment>
<comment type="alternative products">
    <event type="alternative splicing"/>
    <isoform>
        <id>Q0A2I6-1</id>
        <name>M2</name>
        <sequence type="displayed"/>
    </isoform>
    <isoform>
        <id>Q0A2I5-1</id>
        <name>M1</name>
        <sequence type="external"/>
    </isoform>
    <text>Only the first 9 residues are shared by the 2 isoforms.</text>
</comment>
<comment type="domain">
    <text evidence="1">Cytoplasmic tail plays an important role in virion assembly and morphogenesis.</text>
</comment>
<comment type="miscellaneous">
    <text evidence="1">When the channel is activated, one or more imidazole moieties of His-37 probably become bi-protonated.</text>
</comment>
<comment type="similarity">
    <text evidence="1">Belongs to the influenza viruses matrix protein M2 family.</text>
</comment>
<gene>
    <name evidence="1" type="primary">M</name>
</gene>
<organismHost>
    <name type="scientific">Aves</name>
    <dbReference type="NCBI Taxonomy" id="8782"/>
</organismHost>